<reference key="1">
    <citation type="journal article" date="2010" name="PLoS Genet.">
        <title>De novo assembly of a 40 Mb eukaryotic genome from short sequence reads: Sordaria macrospora, a model organism for fungal morphogenesis.</title>
        <authorList>
            <person name="Nowrousian M."/>
            <person name="Stajich J.E."/>
            <person name="Chu M."/>
            <person name="Engh I."/>
            <person name="Espagne E."/>
            <person name="Halliday K."/>
            <person name="Kamerewerd J."/>
            <person name="Kempken F."/>
            <person name="Knab B."/>
            <person name="Kuo H.-C."/>
            <person name="Osiewacz H.D."/>
            <person name="Poeggeler S."/>
            <person name="Read N.D."/>
            <person name="Seiler S."/>
            <person name="Smith K.M."/>
            <person name="Zickler D."/>
            <person name="Kueck U."/>
            <person name="Freitag M."/>
        </authorList>
    </citation>
    <scope>NUCLEOTIDE SEQUENCE [LARGE SCALE GENOMIC DNA]</scope>
    <source>
        <strain>ATCC MYA-333 / DSM 997 / K(L3346) / K-hell</strain>
    </source>
</reference>
<dbReference type="EMBL" id="CABT02000003">
    <property type="protein sequence ID" value="CCC07263.1"/>
    <property type="molecule type" value="Genomic_DNA"/>
</dbReference>
<dbReference type="RefSeq" id="XP_003345567.1">
    <property type="nucleotide sequence ID" value="XM_003345519.1"/>
</dbReference>
<dbReference type="SMR" id="D1ZQ10"/>
<dbReference type="STRING" id="771870.D1ZQ10"/>
<dbReference type="GeneID" id="10802915"/>
<dbReference type="KEGG" id="smp:10802915"/>
<dbReference type="VEuPathDB" id="FungiDB:SMAC_06220"/>
<dbReference type="eggNOG" id="ENOG502S7IA">
    <property type="taxonomic scope" value="Eukaryota"/>
</dbReference>
<dbReference type="HOGENOM" id="CLU_047598_0_0_1"/>
<dbReference type="InParanoid" id="D1ZQ10"/>
<dbReference type="OMA" id="MSCSCNT"/>
<dbReference type="OrthoDB" id="5578174at2759"/>
<dbReference type="Proteomes" id="UP000001881">
    <property type="component" value="Unassembled WGS sequence"/>
</dbReference>
<dbReference type="GO" id="GO:0005739">
    <property type="term" value="C:mitochondrion"/>
    <property type="evidence" value="ECO:0007669"/>
    <property type="project" value="UniProtKB-SubCell"/>
</dbReference>
<dbReference type="GO" id="GO:0005634">
    <property type="term" value="C:nucleus"/>
    <property type="evidence" value="ECO:0007669"/>
    <property type="project" value="TreeGrafter"/>
</dbReference>
<dbReference type="InterPro" id="IPR010487">
    <property type="entry name" value="NGRN/Rrg9"/>
</dbReference>
<dbReference type="PANTHER" id="PTHR13475">
    <property type="entry name" value="NEUGRIN"/>
    <property type="match status" value="1"/>
</dbReference>
<dbReference type="PANTHER" id="PTHR13475:SF3">
    <property type="entry name" value="NEUGRIN"/>
    <property type="match status" value="1"/>
</dbReference>
<dbReference type="Pfam" id="PF06413">
    <property type="entry name" value="Neugrin"/>
    <property type="match status" value="1"/>
</dbReference>
<accession>D1ZQ10</accession>
<accession>F7VP36</accession>
<feature type="transit peptide" description="Mitochondrion" evidence="2">
    <location>
        <begin position="1"/>
        <end position="60"/>
    </location>
</feature>
<feature type="chain" id="PRO_0000407965" description="Required for respiratory growth protein 9, mitochondrial">
    <location>
        <begin position="61"/>
        <end position="341"/>
    </location>
</feature>
<feature type="region of interest" description="Disordered" evidence="3">
    <location>
        <begin position="37"/>
        <end position="129"/>
    </location>
</feature>
<feature type="region of interest" description="Disordered" evidence="3">
    <location>
        <begin position="149"/>
        <end position="217"/>
    </location>
</feature>
<feature type="compositionally biased region" description="Basic and acidic residues" evidence="3">
    <location>
        <begin position="112"/>
        <end position="129"/>
    </location>
</feature>
<feature type="compositionally biased region" description="Basic and acidic residues" evidence="3">
    <location>
        <begin position="149"/>
        <end position="172"/>
    </location>
</feature>
<feature type="compositionally biased region" description="Gly residues" evidence="3">
    <location>
        <begin position="181"/>
        <end position="190"/>
    </location>
</feature>
<feature type="compositionally biased region" description="Basic and acidic residues" evidence="3">
    <location>
        <begin position="201"/>
        <end position="217"/>
    </location>
</feature>
<protein>
    <recommendedName>
        <fullName>Required for respiratory growth protein 9, mitochondrial</fullName>
    </recommendedName>
</protein>
<comment type="function">
    <text evidence="1">Required for respiratory activity and maintenance and expression of the mitochondrial genome.</text>
</comment>
<comment type="subcellular location">
    <subcellularLocation>
        <location evidence="1">Mitochondrion</location>
    </subcellularLocation>
</comment>
<comment type="similarity">
    <text evidence="4">Belongs to the RRG9 family.</text>
</comment>
<organism>
    <name type="scientific">Sordaria macrospora (strain ATCC MYA-333 / DSM 997 / K(L3346) / K-hell)</name>
    <dbReference type="NCBI Taxonomy" id="771870"/>
    <lineage>
        <taxon>Eukaryota</taxon>
        <taxon>Fungi</taxon>
        <taxon>Dikarya</taxon>
        <taxon>Ascomycota</taxon>
        <taxon>Pezizomycotina</taxon>
        <taxon>Sordariomycetes</taxon>
        <taxon>Sordariomycetidae</taxon>
        <taxon>Sordariales</taxon>
        <taxon>Sordariaceae</taxon>
        <taxon>Sordaria</taxon>
    </lineage>
</organism>
<gene>
    <name type="primary">RRG9</name>
    <name type="ORF">SMAC_06220</name>
</gene>
<evidence type="ECO:0000250" key="1"/>
<evidence type="ECO:0000255" key="2"/>
<evidence type="ECO:0000256" key="3">
    <source>
        <dbReference type="SAM" id="MobiDB-lite"/>
    </source>
</evidence>
<evidence type="ECO:0000305" key="4"/>
<proteinExistence type="inferred from homology"/>
<sequence length="341" mass="39924">MSCSCNTAALRIFVRNVANIQVPSSQQVTPRALSGIYRPRTTTHLPLHTRSLHTTRAARTDSTDAVSEEANQSEPPTATEKPETPKLLFRKTRSPPNPEWKAKNLPQRPNYHPRDYKKKPGLDVDDTPKEELKKKIRWRGLPEEERRELYAKAGKEMPDEAERQARKQERQAQKLKQSLEGAGGRGGEGGEPFKKYNPSNPKREDWQHQKNALKEKFPEGWKPLKKLSPDALEGIRALHKQFPDEYTTEVLADKFQVSPEAIRRILRSKWRPDPEEEIERQERWFKRGTQIWQRYAELGVKPPKKWREQGIKPNKYWKEEDKEKTFKDRHIANVRLHRSLL</sequence>
<keyword id="KW-0496">Mitochondrion</keyword>
<keyword id="KW-1185">Reference proteome</keyword>
<keyword id="KW-0809">Transit peptide</keyword>
<name>RRG9_SORMK</name>